<organism>
    <name type="scientific">Capsicum frutescens</name>
    <name type="common">Cayenne pepper</name>
    <name type="synonym">Tabasco pepper</name>
    <dbReference type="NCBI Taxonomy" id="4073"/>
    <lineage>
        <taxon>Eukaryota</taxon>
        <taxon>Viridiplantae</taxon>
        <taxon>Streptophyta</taxon>
        <taxon>Embryophyta</taxon>
        <taxon>Tracheophyta</taxon>
        <taxon>Spermatophyta</taxon>
        <taxon>Magnoliopsida</taxon>
        <taxon>eudicotyledons</taxon>
        <taxon>Gunneridae</taxon>
        <taxon>Pentapetalae</taxon>
        <taxon>asterids</taxon>
        <taxon>lamiids</taxon>
        <taxon>Solanales</taxon>
        <taxon>Solanaceae</taxon>
        <taxon>Solanoideae</taxon>
        <taxon>Capsiceae</taxon>
        <taxon>Capsicum</taxon>
    </lineage>
</organism>
<sequence length="459" mass="50698">MANITNEFMGHDMLAPFTAGWQSDMEPLVIEKSKGSYVYDINGKKYLDTLSGLWCATLGGSETRLVEAANKQLNTLPFYHSFWNRTTKPSLDLAKELLNMFTANKMAKVFFTNSGSEANDTQVKLVWYYNNALGRPQKKKIIARAKAYHGSTYISAGLSGLPPMHQKFDLPPPFVLHTECPHYWAYHLPGETEEEFSTRLANNLESLILNEGPETVAAFIAEPVLGAAGVILPPATYFDKVQAILRKHDILFIADEVVCGFGRLGTMFGSDKYNIKPDLVSVAKALSSGYMPIAAVLVSQKISSVILSESNKIGAFCHGFTYSGHPVACAVALEALKIYKERNITEVVNKISQKFQEGLKAFADSPIIGEIRGTGLALSTEFVDNKSPNDPFPYEWAVGTYFGAQCAKYGMLVSSTGDHVNMAPPFTLSLEELDELIRIYGKALKDTEKRVEELKSQKK</sequence>
<evidence type="ECO:0000250" key="1">
    <source>
        <dbReference type="UniProtKB" id="P12995"/>
    </source>
</evidence>
<evidence type="ECO:0000255" key="2"/>
<evidence type="ECO:0000269" key="3">
    <source>
    </source>
</evidence>
<evidence type="ECO:0000269" key="4">
    <source>
    </source>
</evidence>
<evidence type="ECO:0000303" key="5">
    <source>
    </source>
</evidence>
<evidence type="ECO:0000305" key="6"/>
<proteinExistence type="evidence at protein level"/>
<comment type="function">
    <text evidence="3 4 6">Involved in the biosynthesis of capsaicinoids natural products, pungent alkaloids synthesized from phenylpropanoid intermediates in the placental tissue of chili pepper fruit acting as repellant on herbivorous mammals and conferring spiciness to hot peppers (PubMed:22921003, PubMed:26048129). Can transfer an amine from alanine to vanillin, forming vanillylamine and pyruvate (PubMed:22921003).</text>
</comment>
<comment type="catalytic activity">
    <reaction evidence="3">
        <text>vanillin + L-alanine = vanillylamine + pyruvate</text>
        <dbReference type="Rhea" id="RHEA:63828"/>
        <dbReference type="ChEBI" id="CHEBI:15361"/>
        <dbReference type="ChEBI" id="CHEBI:18346"/>
        <dbReference type="ChEBI" id="CHEBI:57972"/>
        <dbReference type="ChEBI" id="CHEBI:149596"/>
        <dbReference type="EC" id="2.6.1.119"/>
    </reaction>
</comment>
<comment type="tissue specificity">
    <text evidence="4">Expressed in placental tissue of immature fruit.</text>
</comment>
<comment type="similarity">
    <text evidence="6">Belongs to the class-III pyridoxal-phosphate-dependent aminotransferase family.</text>
</comment>
<feature type="chain" id="PRO_0000451918" description="Vanillin aminotransferase">
    <location>
        <begin position="1"/>
        <end position="459"/>
    </location>
</feature>
<feature type="coiled-coil region" evidence="2">
    <location>
        <begin position="428"/>
        <end position="459"/>
    </location>
</feature>
<feature type="binding site" evidence="1">
    <location>
        <begin position="115"/>
        <end position="116"/>
    </location>
    <ligand>
        <name>pyridoxal 5'-phosphate</name>
        <dbReference type="ChEBI" id="CHEBI:597326"/>
    </ligand>
</feature>
<feature type="binding site" evidence="1">
    <location>
        <position position="255"/>
    </location>
    <ligand>
        <name>pyridoxal 5'-phosphate</name>
        <dbReference type="ChEBI" id="CHEBI:597326"/>
    </ligand>
</feature>
<feature type="binding site" evidence="1">
    <location>
        <begin position="320"/>
        <end position="321"/>
    </location>
    <ligand>
        <name>pyridoxal 5'-phosphate</name>
        <dbReference type="ChEBI" id="CHEBI:597326"/>
    </ligand>
</feature>
<feature type="modified residue" description="N6-(pyridoxal phosphate)lysine" evidence="1">
    <location>
        <position position="284"/>
    </location>
</feature>
<feature type="mutagenesis site" description="Low pungency phenotype, characterized by low levels of capsaicinoids, and accumulation of high levels of capsinoids, which are non-pungent capsaicinoid analogs." evidence="4">
    <location>
        <begin position="155"/>
        <end position="158"/>
    </location>
</feature>
<protein>
    <recommendedName>
        <fullName evidence="5">Vanillin aminotransferase</fullName>
        <ecNumber evidence="3">2.6.1.119</ecNumber>
    </recommendedName>
    <alternativeName>
        <fullName evidence="5">Putative aminotransferase</fullName>
        <shortName evidence="5">pAMT</shortName>
    </alternativeName>
</protein>
<dbReference type="EC" id="2.6.1.119" evidence="3"/>
<dbReference type="EMBL" id="HM057189">
    <property type="protein sequence ID" value="ADG65346.1"/>
    <property type="molecule type" value="mRNA"/>
</dbReference>
<dbReference type="EMBL" id="LC019771">
    <property type="protein sequence ID" value="BAR88386.1"/>
    <property type="molecule type" value="mRNA"/>
</dbReference>
<dbReference type="EMBL" id="LC019772">
    <property type="protein sequence ID" value="BAR88387.1"/>
    <property type="molecule type" value="mRNA"/>
</dbReference>
<dbReference type="SMR" id="D6R3B6"/>
<dbReference type="BRENDA" id="2.6.1.119">
    <property type="organism ID" value="1172"/>
</dbReference>
<dbReference type="GO" id="GO:0004015">
    <property type="term" value="F:adenosylmethionine-8-amino-7-oxononanoate transaminase activity"/>
    <property type="evidence" value="ECO:0007669"/>
    <property type="project" value="TreeGrafter"/>
</dbReference>
<dbReference type="GO" id="GO:0030170">
    <property type="term" value="F:pyridoxal phosphate binding"/>
    <property type="evidence" value="ECO:0007669"/>
    <property type="project" value="InterPro"/>
</dbReference>
<dbReference type="GO" id="GO:0008483">
    <property type="term" value="F:transaminase activity"/>
    <property type="evidence" value="ECO:0000314"/>
    <property type="project" value="UniProtKB"/>
</dbReference>
<dbReference type="GO" id="GO:0009821">
    <property type="term" value="P:alkaloid biosynthetic process"/>
    <property type="evidence" value="ECO:0000314"/>
    <property type="project" value="UniProtKB"/>
</dbReference>
<dbReference type="GO" id="GO:0009102">
    <property type="term" value="P:biotin biosynthetic process"/>
    <property type="evidence" value="ECO:0007669"/>
    <property type="project" value="TreeGrafter"/>
</dbReference>
<dbReference type="GO" id="GO:0009448">
    <property type="term" value="P:gamma-aminobutyric acid metabolic process"/>
    <property type="evidence" value="ECO:0007669"/>
    <property type="project" value="TreeGrafter"/>
</dbReference>
<dbReference type="CDD" id="cd00610">
    <property type="entry name" value="OAT_like"/>
    <property type="match status" value="1"/>
</dbReference>
<dbReference type="FunFam" id="3.40.640.10:FF:000014">
    <property type="entry name" value="Adenosylmethionine-8-amino-7-oxononanoate aminotransferase, probable"/>
    <property type="match status" value="1"/>
</dbReference>
<dbReference type="Gene3D" id="3.90.1150.10">
    <property type="entry name" value="Aspartate Aminotransferase, domain 1"/>
    <property type="match status" value="1"/>
</dbReference>
<dbReference type="Gene3D" id="3.40.640.10">
    <property type="entry name" value="Type I PLP-dependent aspartate aminotransferase-like (Major domain)"/>
    <property type="match status" value="1"/>
</dbReference>
<dbReference type="InterPro" id="IPR005814">
    <property type="entry name" value="Aminotrans_3"/>
</dbReference>
<dbReference type="InterPro" id="IPR049704">
    <property type="entry name" value="Aminotrans_3_PPA_site"/>
</dbReference>
<dbReference type="InterPro" id="IPR015424">
    <property type="entry name" value="PyrdxlP-dep_Trfase"/>
</dbReference>
<dbReference type="InterPro" id="IPR015421">
    <property type="entry name" value="PyrdxlP-dep_Trfase_major"/>
</dbReference>
<dbReference type="InterPro" id="IPR015422">
    <property type="entry name" value="PyrdxlP-dep_Trfase_small"/>
</dbReference>
<dbReference type="NCBIfam" id="NF004767">
    <property type="entry name" value="PRK06105.1"/>
    <property type="match status" value="1"/>
</dbReference>
<dbReference type="PANTHER" id="PTHR42684">
    <property type="entry name" value="ADENOSYLMETHIONINE-8-AMINO-7-OXONONANOATE AMINOTRANSFERASE"/>
    <property type="match status" value="1"/>
</dbReference>
<dbReference type="PANTHER" id="PTHR42684:SF10">
    <property type="entry name" value="GAMMA AMINOBUTYRATE TRANSAMINASE 2"/>
    <property type="match status" value="1"/>
</dbReference>
<dbReference type="Pfam" id="PF00202">
    <property type="entry name" value="Aminotran_3"/>
    <property type="match status" value="1"/>
</dbReference>
<dbReference type="SUPFAM" id="SSF53383">
    <property type="entry name" value="PLP-dependent transferases"/>
    <property type="match status" value="1"/>
</dbReference>
<dbReference type="PROSITE" id="PS00600">
    <property type="entry name" value="AA_TRANSFER_CLASS_3"/>
    <property type="match status" value="1"/>
</dbReference>
<gene>
    <name evidence="6" type="primary">PAMT</name>
</gene>
<name>PAMT_CAPFR</name>
<reference key="1">
    <citation type="journal article" date="2012" name="Plant Sci.">
        <title>Functional validation of Capsicum frutescens aminotransferase gene involved in vanillylamine biosynthesis using Agrobacterium mediated genetic transformation studies in Nicotiana tabacum and Capsicum frutescens calli cultures.</title>
        <authorList>
            <person name="Gururaj H.B."/>
            <person name="Padma M.N."/>
            <person name="Giridhar P."/>
            <person name="Ravishankar G.A."/>
        </authorList>
    </citation>
    <scope>NUCLEOTIDE SEQUENCE [MRNA]</scope>
    <scope>FUNCTION</scope>
    <scope>CATALYTIC ACTIVITY</scope>
</reference>
<reference key="2">
    <citation type="journal article" date="2015" name="Mol. Genet. Genomics">
        <title>A low-pungency S3212 genotype of Capsicum frutescens caused by a mutation in the putative aminotransferase (p-AMT) gene.</title>
        <authorList>
            <person name="Park Y.J."/>
            <person name="Nishikawa T."/>
            <person name="Minami M."/>
            <person name="Nemoto K."/>
            <person name="Iwasaki T."/>
            <person name="Matsushima K."/>
        </authorList>
    </citation>
    <scope>NUCLEOTIDE SEQUENCE [MRNA]</scope>
    <scope>FUNCTION</scope>
    <scope>TISSUE SPECIFICITY</scope>
    <scope>MUTAGENESIS OF 155-SER--LEU-158</scope>
</reference>
<accession>D6R3B6</accession>
<keyword id="KW-0032">Aminotransferase</keyword>
<keyword id="KW-0175">Coiled coil</keyword>
<keyword id="KW-0663">Pyridoxal phosphate</keyword>
<keyword id="KW-0808">Transferase</keyword>